<name>CTAA_METS4</name>
<dbReference type="EC" id="1.17.99.9" evidence="1"/>
<dbReference type="EMBL" id="CP000943">
    <property type="protein sequence ID" value="ACA19685.1"/>
    <property type="molecule type" value="Genomic_DNA"/>
</dbReference>
<dbReference type="RefSeq" id="WP_012335070.1">
    <property type="nucleotide sequence ID" value="NC_010511.1"/>
</dbReference>
<dbReference type="SMR" id="B0UR12"/>
<dbReference type="STRING" id="426117.M446_5367"/>
<dbReference type="KEGG" id="met:M446_5367"/>
<dbReference type="eggNOG" id="COG1612">
    <property type="taxonomic scope" value="Bacteria"/>
</dbReference>
<dbReference type="HOGENOM" id="CLU_017627_0_0_5"/>
<dbReference type="UniPathway" id="UPA00269">
    <property type="reaction ID" value="UER00713"/>
</dbReference>
<dbReference type="GO" id="GO:0005886">
    <property type="term" value="C:plasma membrane"/>
    <property type="evidence" value="ECO:0007669"/>
    <property type="project" value="UniProtKB-SubCell"/>
</dbReference>
<dbReference type="GO" id="GO:0046872">
    <property type="term" value="F:metal ion binding"/>
    <property type="evidence" value="ECO:0007669"/>
    <property type="project" value="UniProtKB-KW"/>
</dbReference>
<dbReference type="GO" id="GO:0016653">
    <property type="term" value="F:oxidoreductase activity, acting on NAD(P)H, heme protein as acceptor"/>
    <property type="evidence" value="ECO:0007669"/>
    <property type="project" value="InterPro"/>
</dbReference>
<dbReference type="GO" id="GO:0006784">
    <property type="term" value="P:heme A biosynthetic process"/>
    <property type="evidence" value="ECO:0007669"/>
    <property type="project" value="UniProtKB-UniRule"/>
</dbReference>
<dbReference type="HAMAP" id="MF_01665">
    <property type="entry name" value="HemeA_synth_type2"/>
    <property type="match status" value="1"/>
</dbReference>
<dbReference type="InterPro" id="IPR003780">
    <property type="entry name" value="COX15/CtaA_fam"/>
</dbReference>
<dbReference type="InterPro" id="IPR023754">
    <property type="entry name" value="HemeA_Synthase_type2"/>
</dbReference>
<dbReference type="PANTHER" id="PTHR23289">
    <property type="entry name" value="CYTOCHROME C OXIDASE ASSEMBLY PROTEIN COX15"/>
    <property type="match status" value="1"/>
</dbReference>
<dbReference type="PANTHER" id="PTHR23289:SF2">
    <property type="entry name" value="CYTOCHROME C OXIDASE ASSEMBLY PROTEIN COX15 HOMOLOG"/>
    <property type="match status" value="1"/>
</dbReference>
<dbReference type="Pfam" id="PF02628">
    <property type="entry name" value="COX15-CtaA"/>
    <property type="match status" value="1"/>
</dbReference>
<sequence>MTSAALKPLSVAPARDRAASRPRIAVRRWLFLMAALVVAMVAVGGATRLTGSGLSITEWKPVTGAVPPLSAEAWAEEFAKYRATPQYDILNRGMSLAEFQVIYAWEWGHRFLGRLIGLCFFLPLGWFWWTGRLDRRLGLGLVGLGVLGGLQGAVGWIMVASGLQPGMVAVAPIKLAAHLTLASAIFAGLVWLAAGLDRPAEAAAPRRLRLTALLLPVATLLQIALGGLVAGSKAGLTYNTWPLMDGAFIPPVSGLFAATPWIENFVDNVALVQLNHRLVAYALLALALLHALDARRARPGSGAARRAAALAGLVAAQAMLGITTLLLAVPLWAGLAHQVTAMLVLGMAVAHARIGTLARG</sequence>
<feature type="chain" id="PRO_0000349047" description="Heme A synthase">
    <location>
        <begin position="1"/>
        <end position="360"/>
    </location>
</feature>
<feature type="transmembrane region" description="Helical" evidence="1">
    <location>
        <begin position="29"/>
        <end position="49"/>
    </location>
</feature>
<feature type="transmembrane region" description="Helical" evidence="1">
    <location>
        <begin position="111"/>
        <end position="131"/>
    </location>
</feature>
<feature type="transmembrane region" description="Helical" evidence="1">
    <location>
        <begin position="139"/>
        <end position="159"/>
    </location>
</feature>
<feature type="transmembrane region" description="Helical" evidence="1">
    <location>
        <begin position="175"/>
        <end position="195"/>
    </location>
</feature>
<feature type="transmembrane region" description="Helical" evidence="1">
    <location>
        <begin position="210"/>
        <end position="230"/>
    </location>
</feature>
<feature type="transmembrane region" description="Helical" evidence="1">
    <location>
        <begin position="269"/>
        <end position="289"/>
    </location>
</feature>
<feature type="transmembrane region" description="Helical" evidence="1">
    <location>
        <begin position="309"/>
        <end position="329"/>
    </location>
</feature>
<feature type="transmembrane region" description="Helical" evidence="1">
    <location>
        <begin position="330"/>
        <end position="350"/>
    </location>
</feature>
<feature type="binding site" description="axial binding residue" evidence="1">
    <location>
        <position position="276"/>
    </location>
    <ligand>
        <name>heme</name>
        <dbReference type="ChEBI" id="CHEBI:30413"/>
    </ligand>
    <ligandPart>
        <name>Fe</name>
        <dbReference type="ChEBI" id="CHEBI:18248"/>
    </ligandPart>
</feature>
<feature type="binding site" description="axial binding residue" evidence="1">
    <location>
        <position position="337"/>
    </location>
    <ligand>
        <name>heme</name>
        <dbReference type="ChEBI" id="CHEBI:30413"/>
    </ligand>
    <ligandPart>
        <name>Fe</name>
        <dbReference type="ChEBI" id="CHEBI:18248"/>
    </ligandPart>
</feature>
<proteinExistence type="inferred from homology"/>
<gene>
    <name evidence="1" type="primary">ctaA</name>
    <name type="ordered locus">M446_5367</name>
</gene>
<comment type="function">
    <text evidence="1">Catalyzes the conversion of heme O to heme A by two successive hydroxylations of the methyl group at C8. The first hydroxylation forms heme I, the second hydroxylation results in an unstable dihydroxymethyl group, which spontaneously dehydrates, resulting in the formyl group of heme A.</text>
</comment>
<comment type="catalytic activity">
    <reaction evidence="1">
        <text>Fe(II)-heme o + 2 A + H2O = Fe(II)-heme a + 2 AH2</text>
        <dbReference type="Rhea" id="RHEA:63388"/>
        <dbReference type="ChEBI" id="CHEBI:13193"/>
        <dbReference type="ChEBI" id="CHEBI:15377"/>
        <dbReference type="ChEBI" id="CHEBI:17499"/>
        <dbReference type="ChEBI" id="CHEBI:60530"/>
        <dbReference type="ChEBI" id="CHEBI:61715"/>
        <dbReference type="EC" id="1.17.99.9"/>
    </reaction>
    <physiologicalReaction direction="left-to-right" evidence="1">
        <dbReference type="Rhea" id="RHEA:63389"/>
    </physiologicalReaction>
</comment>
<comment type="cofactor">
    <cofactor evidence="1">
        <name>heme b</name>
        <dbReference type="ChEBI" id="CHEBI:60344"/>
    </cofactor>
</comment>
<comment type="pathway">
    <text evidence="1">Porphyrin-containing compound metabolism; heme A biosynthesis; heme A from heme O: step 1/1.</text>
</comment>
<comment type="subunit">
    <text evidence="1">Interacts with CtaB.</text>
</comment>
<comment type="subcellular location">
    <subcellularLocation>
        <location evidence="1">Cell membrane</location>
        <topology evidence="1">Multi-pass membrane protein</topology>
    </subcellularLocation>
</comment>
<comment type="similarity">
    <text evidence="1">Belongs to the COX15/CtaA family. Type 2 subfamily.</text>
</comment>
<protein>
    <recommendedName>
        <fullName evidence="1">Heme A synthase</fullName>
        <shortName evidence="1">HAS</shortName>
        <ecNumber evidence="1">1.17.99.9</ecNumber>
    </recommendedName>
    <alternativeName>
        <fullName evidence="1">Cytochrome aa3-controlling protein</fullName>
    </alternativeName>
</protein>
<organism>
    <name type="scientific">Methylobacterium sp. (strain 4-46)</name>
    <dbReference type="NCBI Taxonomy" id="426117"/>
    <lineage>
        <taxon>Bacteria</taxon>
        <taxon>Pseudomonadati</taxon>
        <taxon>Pseudomonadota</taxon>
        <taxon>Alphaproteobacteria</taxon>
        <taxon>Hyphomicrobiales</taxon>
        <taxon>Methylobacteriaceae</taxon>
        <taxon>Methylobacterium</taxon>
    </lineage>
</organism>
<keyword id="KW-1003">Cell membrane</keyword>
<keyword id="KW-0350">Heme biosynthesis</keyword>
<keyword id="KW-0408">Iron</keyword>
<keyword id="KW-0472">Membrane</keyword>
<keyword id="KW-0479">Metal-binding</keyword>
<keyword id="KW-0560">Oxidoreductase</keyword>
<keyword id="KW-0812">Transmembrane</keyword>
<keyword id="KW-1133">Transmembrane helix</keyword>
<evidence type="ECO:0000255" key="1">
    <source>
        <dbReference type="HAMAP-Rule" id="MF_01665"/>
    </source>
</evidence>
<reference key="1">
    <citation type="submission" date="2008-02" db="EMBL/GenBank/DDBJ databases">
        <title>Complete sequence of chromosome of Methylobacterium sp. 4-46.</title>
        <authorList>
            <consortium name="US DOE Joint Genome Institute"/>
            <person name="Copeland A."/>
            <person name="Lucas S."/>
            <person name="Lapidus A."/>
            <person name="Glavina del Rio T."/>
            <person name="Dalin E."/>
            <person name="Tice H."/>
            <person name="Bruce D."/>
            <person name="Goodwin L."/>
            <person name="Pitluck S."/>
            <person name="Chertkov O."/>
            <person name="Brettin T."/>
            <person name="Detter J.C."/>
            <person name="Han C."/>
            <person name="Kuske C.R."/>
            <person name="Schmutz J."/>
            <person name="Larimer F."/>
            <person name="Land M."/>
            <person name="Hauser L."/>
            <person name="Kyrpides N."/>
            <person name="Ivanova N."/>
            <person name="Marx C.J."/>
            <person name="Richardson P."/>
        </authorList>
    </citation>
    <scope>NUCLEOTIDE SEQUENCE [LARGE SCALE GENOMIC DNA]</scope>
    <source>
        <strain>4-46</strain>
    </source>
</reference>
<accession>B0UR12</accession>